<accession>Q5ABG1</accession>
<accession>A0A1D8PCE5</accession>
<organism>
    <name type="scientific">Candida albicans (strain SC5314 / ATCC MYA-2876)</name>
    <name type="common">Yeast</name>
    <dbReference type="NCBI Taxonomy" id="237561"/>
    <lineage>
        <taxon>Eukaryota</taxon>
        <taxon>Fungi</taxon>
        <taxon>Dikarya</taxon>
        <taxon>Ascomycota</taxon>
        <taxon>Saccharomycotina</taxon>
        <taxon>Pichiomycetes</taxon>
        <taxon>Debaryomycetaceae</taxon>
        <taxon>Candida/Lodderomyces clade</taxon>
        <taxon>Candida</taxon>
    </lineage>
</organism>
<feature type="chain" id="PRO_0000269767" description="Histone-lysine N-methyltransferase, H3 lysine-4 specific">
    <location>
        <begin position="1"/>
        <end position="1040"/>
    </location>
</feature>
<feature type="domain" description="SET" evidence="3">
    <location>
        <begin position="898"/>
        <end position="1015"/>
    </location>
</feature>
<feature type="domain" description="Post-SET" evidence="2">
    <location>
        <begin position="1024"/>
        <end position="1040"/>
    </location>
</feature>
<feature type="region of interest" description="Disordered" evidence="4">
    <location>
        <begin position="1"/>
        <end position="129"/>
    </location>
</feature>
<feature type="region of interest" description="Disordered" evidence="4">
    <location>
        <begin position="175"/>
        <end position="202"/>
    </location>
</feature>
<feature type="region of interest" description="Disordered" evidence="4">
    <location>
        <begin position="353"/>
        <end position="374"/>
    </location>
</feature>
<feature type="region of interest" description="Disordered" evidence="4">
    <location>
        <begin position="591"/>
        <end position="664"/>
    </location>
</feature>
<feature type="region of interest" description="Disordered" evidence="4">
    <location>
        <begin position="692"/>
        <end position="737"/>
    </location>
</feature>
<feature type="short sequence motif" description="RxxxRR motif" evidence="1">
    <location>
        <begin position="867"/>
        <end position="872"/>
    </location>
</feature>
<feature type="compositionally biased region" description="Basic residues" evidence="4">
    <location>
        <begin position="18"/>
        <end position="27"/>
    </location>
</feature>
<feature type="compositionally biased region" description="Basic and acidic residues" evidence="4">
    <location>
        <begin position="71"/>
        <end position="84"/>
    </location>
</feature>
<feature type="compositionally biased region" description="Low complexity" evidence="4">
    <location>
        <begin position="85"/>
        <end position="96"/>
    </location>
</feature>
<feature type="compositionally biased region" description="Polar residues" evidence="4">
    <location>
        <begin position="97"/>
        <end position="119"/>
    </location>
</feature>
<feature type="compositionally biased region" description="Basic and acidic residues" evidence="4">
    <location>
        <begin position="120"/>
        <end position="129"/>
    </location>
</feature>
<feature type="compositionally biased region" description="Acidic residues" evidence="4">
    <location>
        <begin position="635"/>
        <end position="644"/>
    </location>
</feature>
<feature type="compositionally biased region" description="Acidic residues" evidence="4">
    <location>
        <begin position="698"/>
        <end position="709"/>
    </location>
</feature>
<feature type="compositionally biased region" description="Basic and acidic residues" evidence="4">
    <location>
        <begin position="710"/>
        <end position="721"/>
    </location>
</feature>
<feature type="binding site" evidence="3">
    <location>
        <position position="1014"/>
    </location>
    <ligand>
        <name>S-adenosyl-L-methionine</name>
        <dbReference type="ChEBI" id="CHEBI:59789"/>
    </ligand>
</feature>
<dbReference type="EC" id="2.1.1.354" evidence="1"/>
<dbReference type="EMBL" id="CP017623">
    <property type="protein sequence ID" value="AOW25793.1"/>
    <property type="molecule type" value="Genomic_DNA"/>
</dbReference>
<dbReference type="RefSeq" id="XP_718971.1">
    <property type="nucleotide sequence ID" value="XM_713878.1"/>
</dbReference>
<dbReference type="SMR" id="Q5ABG1"/>
<dbReference type="ELM" id="Q5ABG1"/>
<dbReference type="FunCoup" id="Q5ABG1">
    <property type="interactions" value="146"/>
</dbReference>
<dbReference type="STRING" id="237561.Q5ABG1"/>
<dbReference type="EnsemblFungi" id="C1_00960C_A-T">
    <property type="protein sequence ID" value="C1_00960C_A-T-p1"/>
    <property type="gene ID" value="C1_00960C_A"/>
</dbReference>
<dbReference type="GeneID" id="3639280"/>
<dbReference type="KEGG" id="cal:CAALFM_C100960CA"/>
<dbReference type="CGD" id="CAL0000198993">
    <property type="gene designation" value="SET1"/>
</dbReference>
<dbReference type="VEuPathDB" id="FungiDB:C1_00960C_A"/>
<dbReference type="eggNOG" id="KOG1080">
    <property type="taxonomic scope" value="Eukaryota"/>
</dbReference>
<dbReference type="HOGENOM" id="CLU_004391_1_0_1"/>
<dbReference type="InParanoid" id="Q5ABG1"/>
<dbReference type="OMA" id="ERLPCLC"/>
<dbReference type="OrthoDB" id="308383at2759"/>
<dbReference type="PHI-base" id="PHI:11771"/>
<dbReference type="PHI-base" id="PHI:2825"/>
<dbReference type="PRO" id="PR:Q5ABG1"/>
<dbReference type="Proteomes" id="UP000000559">
    <property type="component" value="Chromosome 1"/>
</dbReference>
<dbReference type="GO" id="GO:0000781">
    <property type="term" value="C:chromosome, telomeric region"/>
    <property type="evidence" value="ECO:0007669"/>
    <property type="project" value="EnsemblFungi"/>
</dbReference>
<dbReference type="GO" id="GO:0048188">
    <property type="term" value="C:Set1C/COMPASS complex"/>
    <property type="evidence" value="ECO:0000250"/>
    <property type="project" value="UniProtKB"/>
</dbReference>
<dbReference type="GO" id="GO:0042800">
    <property type="term" value="F:histone H3K4 methyltransferase activity"/>
    <property type="evidence" value="ECO:0000315"/>
    <property type="project" value="CGD"/>
</dbReference>
<dbReference type="GO" id="GO:0140999">
    <property type="term" value="F:histone H3K4 trimethyltransferase activity"/>
    <property type="evidence" value="ECO:0007669"/>
    <property type="project" value="UniProtKB-EC"/>
</dbReference>
<dbReference type="GO" id="GO:0003723">
    <property type="term" value="F:RNA binding"/>
    <property type="evidence" value="ECO:0000250"/>
    <property type="project" value="UniProtKB"/>
</dbReference>
<dbReference type="GO" id="GO:0030437">
    <property type="term" value="P:ascospore formation"/>
    <property type="evidence" value="ECO:0007669"/>
    <property type="project" value="EnsemblFungi"/>
</dbReference>
<dbReference type="GO" id="GO:0048869">
    <property type="term" value="P:cellular developmental process"/>
    <property type="evidence" value="ECO:0000315"/>
    <property type="project" value="CGD"/>
</dbReference>
<dbReference type="GO" id="GO:0033554">
    <property type="term" value="P:cellular response to stress"/>
    <property type="evidence" value="ECO:0007669"/>
    <property type="project" value="EnsemblFungi"/>
</dbReference>
<dbReference type="GO" id="GO:0030447">
    <property type="term" value="P:filamentous growth"/>
    <property type="evidence" value="ECO:0000315"/>
    <property type="project" value="CGD"/>
</dbReference>
<dbReference type="GO" id="GO:0042138">
    <property type="term" value="P:meiotic DNA double-strand break formation"/>
    <property type="evidence" value="ECO:0007669"/>
    <property type="project" value="EnsemblFungi"/>
</dbReference>
<dbReference type="GO" id="GO:0032259">
    <property type="term" value="P:methylation"/>
    <property type="evidence" value="ECO:0007669"/>
    <property type="project" value="UniProtKB-KW"/>
</dbReference>
<dbReference type="GO" id="GO:0000122">
    <property type="term" value="P:negative regulation of transcription by RNA polymerase II"/>
    <property type="evidence" value="ECO:0007669"/>
    <property type="project" value="EnsemblFungi"/>
</dbReference>
<dbReference type="GO" id="GO:0036166">
    <property type="term" value="P:phenotypic switching"/>
    <property type="evidence" value="ECO:0000315"/>
    <property type="project" value="CGD"/>
</dbReference>
<dbReference type="GO" id="GO:1905088">
    <property type="term" value="P:positive regulation of synaptonemal complex assembly"/>
    <property type="evidence" value="ECO:0007669"/>
    <property type="project" value="EnsemblFungi"/>
</dbReference>
<dbReference type="GO" id="GO:0045944">
    <property type="term" value="P:positive regulation of transcription by RNA polymerase II"/>
    <property type="evidence" value="ECO:0007669"/>
    <property type="project" value="EnsemblFungi"/>
</dbReference>
<dbReference type="GO" id="GO:0000183">
    <property type="term" value="P:rDNA heterochromatin formation"/>
    <property type="evidence" value="ECO:0007669"/>
    <property type="project" value="EnsemblFungi"/>
</dbReference>
<dbReference type="GO" id="GO:1902275">
    <property type="term" value="P:regulation of chromatin organization"/>
    <property type="evidence" value="ECO:0007669"/>
    <property type="project" value="EnsemblFungi"/>
</dbReference>
<dbReference type="GO" id="GO:1903341">
    <property type="term" value="P:regulation of meiotic DNA double-strand break formation"/>
    <property type="evidence" value="ECO:0007669"/>
    <property type="project" value="EnsemblFungi"/>
</dbReference>
<dbReference type="GO" id="GO:0030466">
    <property type="term" value="P:silent mating-type cassette heterochromatin formation"/>
    <property type="evidence" value="ECO:0007669"/>
    <property type="project" value="EnsemblFungi"/>
</dbReference>
<dbReference type="GO" id="GO:0055092">
    <property type="term" value="P:sterol homeostasis"/>
    <property type="evidence" value="ECO:0007669"/>
    <property type="project" value="EnsemblFungi"/>
</dbReference>
<dbReference type="GO" id="GO:0031509">
    <property type="term" value="P:subtelomeric heterochromatin formation"/>
    <property type="evidence" value="ECO:0007669"/>
    <property type="project" value="EnsemblFungi"/>
</dbReference>
<dbReference type="GO" id="GO:0007130">
    <property type="term" value="P:synaptonemal complex assembly"/>
    <property type="evidence" value="ECO:0007669"/>
    <property type="project" value="EnsemblFungi"/>
</dbReference>
<dbReference type="GO" id="GO:0000723">
    <property type="term" value="P:telomere maintenance"/>
    <property type="evidence" value="ECO:0007669"/>
    <property type="project" value="EnsemblFungi"/>
</dbReference>
<dbReference type="CDD" id="cd12302">
    <property type="entry name" value="RRM_scSet1p_like"/>
    <property type="match status" value="1"/>
</dbReference>
<dbReference type="FunFam" id="2.170.270.10:FF:000056">
    <property type="entry name" value="Histone-lysine N-methyltransferase, H3 lysine-4 specific"/>
    <property type="match status" value="1"/>
</dbReference>
<dbReference type="Gene3D" id="3.30.70.330">
    <property type="match status" value="1"/>
</dbReference>
<dbReference type="Gene3D" id="2.170.270.10">
    <property type="entry name" value="SET domain"/>
    <property type="match status" value="1"/>
</dbReference>
<dbReference type="InterPro" id="IPR024657">
    <property type="entry name" value="COMPASS_Set1_N-SET"/>
</dbReference>
<dbReference type="InterPro" id="IPR012677">
    <property type="entry name" value="Nucleotide-bd_a/b_plait_sf"/>
</dbReference>
<dbReference type="InterPro" id="IPR003616">
    <property type="entry name" value="Post-SET_dom"/>
</dbReference>
<dbReference type="InterPro" id="IPR035979">
    <property type="entry name" value="RBD_domain_sf"/>
</dbReference>
<dbReference type="InterPro" id="IPR044570">
    <property type="entry name" value="Set1-like"/>
</dbReference>
<dbReference type="InterPro" id="IPR017111">
    <property type="entry name" value="Set1_fungi"/>
</dbReference>
<dbReference type="InterPro" id="IPR024636">
    <property type="entry name" value="SET_assoc"/>
</dbReference>
<dbReference type="InterPro" id="IPR001214">
    <property type="entry name" value="SET_dom"/>
</dbReference>
<dbReference type="InterPro" id="IPR046341">
    <property type="entry name" value="SET_dom_sf"/>
</dbReference>
<dbReference type="PANTHER" id="PTHR45814">
    <property type="entry name" value="HISTONE-LYSINE N-METHYLTRANSFERASE SETD1"/>
    <property type="match status" value="1"/>
</dbReference>
<dbReference type="PANTHER" id="PTHR45814:SF2">
    <property type="entry name" value="HISTONE-LYSINE N-METHYLTRANSFERASE SETD1"/>
    <property type="match status" value="1"/>
</dbReference>
<dbReference type="Pfam" id="PF11764">
    <property type="entry name" value="N-SET"/>
    <property type="match status" value="1"/>
</dbReference>
<dbReference type="Pfam" id="PF00856">
    <property type="entry name" value="SET"/>
    <property type="match status" value="1"/>
</dbReference>
<dbReference type="Pfam" id="PF11767">
    <property type="entry name" value="SET_assoc"/>
    <property type="match status" value="1"/>
</dbReference>
<dbReference type="PIRSF" id="PIRSF037104">
    <property type="entry name" value="Histone_H3-K4_mtfrase_Set1_fun"/>
    <property type="match status" value="1"/>
</dbReference>
<dbReference type="SMART" id="SM01291">
    <property type="entry name" value="N-SET"/>
    <property type="match status" value="1"/>
</dbReference>
<dbReference type="SMART" id="SM00508">
    <property type="entry name" value="PostSET"/>
    <property type="match status" value="1"/>
</dbReference>
<dbReference type="SMART" id="SM00317">
    <property type="entry name" value="SET"/>
    <property type="match status" value="1"/>
</dbReference>
<dbReference type="SUPFAM" id="SSF54928">
    <property type="entry name" value="RNA-binding domain, RBD"/>
    <property type="match status" value="1"/>
</dbReference>
<dbReference type="SUPFAM" id="SSF82199">
    <property type="entry name" value="SET domain"/>
    <property type="match status" value="1"/>
</dbReference>
<dbReference type="PROSITE" id="PS50868">
    <property type="entry name" value="POST_SET"/>
    <property type="match status" value="1"/>
</dbReference>
<dbReference type="PROSITE" id="PS51572">
    <property type="entry name" value="SAM_MT43_1"/>
    <property type="match status" value="1"/>
</dbReference>
<dbReference type="PROSITE" id="PS50280">
    <property type="entry name" value="SET"/>
    <property type="match status" value="1"/>
</dbReference>
<gene>
    <name type="primary">SET1</name>
    <name type="ordered locus">CAALFM_C100960CA</name>
    <name type="ORF">CaO19.13430</name>
    <name type="ORF">CaO19.6009</name>
</gene>
<keyword id="KW-0156">Chromatin regulator</keyword>
<keyword id="KW-0158">Chromosome</keyword>
<keyword id="KW-0489">Methyltransferase</keyword>
<keyword id="KW-0539">Nucleus</keyword>
<keyword id="KW-1185">Reference proteome</keyword>
<keyword id="KW-0949">S-adenosyl-L-methionine</keyword>
<keyword id="KW-0808">Transferase</keyword>
<protein>
    <recommendedName>
        <fullName>Histone-lysine N-methyltransferase, H3 lysine-4 specific</fullName>
        <ecNumber evidence="1">2.1.1.354</ecNumber>
    </recommendedName>
    <alternativeName>
        <fullName>COMPASS component SET1</fullName>
    </alternativeName>
    <alternativeName>
        <fullName>SET domain-containing protein 1</fullName>
    </alternativeName>
</protein>
<proteinExistence type="inferred from homology"/>
<sequence>MSYNNRSGGGASGGYSRRGYHGSHRGGYRTGRSKYPEDRYLVGGMLSLNKGSHYESSDNRYIPNEIGSKSPENRSHRSSTKDGRTPSGLSTPLSSSDKVSTPISIESINGSDRNTGVNNKDSEFPKLSHHSDFTSTIPFSRSINPQKNFMVINDSHTPKTDKGIQSKKIRYNGEGVNHVSDPRIAQSNSNLQKPTKKTKKTPYKQLPQPKFVYNSDSLGPAPMSTIIIWDLPISTSEPFLRNFVSRYGNPLEEMTFITDPTTAVPLGIVTFKFQGNPQKASELAKNFIKTVRQDELKIDGATLKIALNDNENQLLNRKLESAKKKMLQQRLQREQEEEKRRQKLVEEQKKQELLKKKEKEHQESVKKEKSVEHESTIVSTRDKNLVYKPNSTVLSMRHNHKIISSVILPKDLEKYIKSRPYILIRDKYVPTKKISSHDIKRALKKYDWTRVLSDKSGFFIVFNSLNECERCFLNEDNKKFFEYKLVMEMAIPEGFTNNIRENESKSTNDVLDEATNILIKEFQTFLAKDIRERIIAPNILDLLAHDKYPELVEELKSREQAAKPKVLVTNNQLKENALSILEKQRQLFQQRLPSFRMSHDRTQQHKPKRRNSIIPMQHALNFDDDEDSESHSQSESEDEDEDETTASRPLTPVVSTMKRERSSTITSIEDDIELEEREIKKQKVKVPAIEAEIAPESSPEEGEEEEKEEVEIKQEAEEVDIKFQPTEESPRTVYPEIPFSGDFDLNALQHTIKDSEDLLLAQEVLSETTPSGLSNIEYWSWKSKNRKDVQEISQEEEYIEELPESLQSTTGSFKSEGVRKIPEIEKIGYLPHRKRTNKPIKTIQYEDEDEEKPNENTNAVQSSRVNRANNRRFAADITAQIGSESDVLSLNALTKRKKPVTFARSAIHNWGLYAMEPIAAKEMIIEYVGERIRQQVAEHREKSYLKTGIGSSYLFRIDDNTVIDATKKGGIARFINHCCSPSCTAKIIKVEGKKRIVIYALRDIEANEELTYDYKFERETNDEERIRCLCGAPGCKGYLN</sequence>
<evidence type="ECO:0000250" key="1">
    <source>
        <dbReference type="UniProtKB" id="P38827"/>
    </source>
</evidence>
<evidence type="ECO:0000255" key="2">
    <source>
        <dbReference type="PROSITE-ProRule" id="PRU00155"/>
    </source>
</evidence>
<evidence type="ECO:0000255" key="3">
    <source>
        <dbReference type="PROSITE-ProRule" id="PRU00190"/>
    </source>
</evidence>
<evidence type="ECO:0000256" key="4">
    <source>
        <dbReference type="SAM" id="MobiDB-lite"/>
    </source>
</evidence>
<evidence type="ECO:0000269" key="5">
    <source>
    </source>
</evidence>
<evidence type="ECO:0000305" key="6"/>
<name>SET1_CANAL</name>
<comment type="function">
    <text evidence="1 5">Catalytic component of the COMPASS (Set1C) complex that specifically mono-, di- and trimethylates histone H3 to form H3K4me1/2/3 (PubMed:16629671). Binds RNAs which might negatively affect its histone methyltransferase activity (By similarity). COMPASS recognizes ubiquitinated H2B on one face of the nucleosome which stimulates the methylation of H3 on the opposing face (By similarity). Plays a role in the pathogenesis of invasive candidiasis (PubMed:16629671).</text>
</comment>
<comment type="catalytic activity">
    <reaction evidence="1">
        <text>L-lysyl(4)-[histone H3] + 3 S-adenosyl-L-methionine = N(6),N(6),N(6)-trimethyl-L-lysyl(4)-[histone H3] + 3 S-adenosyl-L-homocysteine + 3 H(+)</text>
        <dbReference type="Rhea" id="RHEA:60260"/>
        <dbReference type="Rhea" id="RHEA-COMP:15537"/>
        <dbReference type="Rhea" id="RHEA-COMP:15547"/>
        <dbReference type="ChEBI" id="CHEBI:15378"/>
        <dbReference type="ChEBI" id="CHEBI:29969"/>
        <dbReference type="ChEBI" id="CHEBI:57856"/>
        <dbReference type="ChEBI" id="CHEBI:59789"/>
        <dbReference type="ChEBI" id="CHEBI:61961"/>
        <dbReference type="EC" id="2.1.1.354"/>
    </reaction>
</comment>
<comment type="catalytic activity">
    <reaction evidence="1">
        <text>N(6)-methyl-L-lysyl(4)-[histone H3] + S-adenosyl-L-methionine = N(6),N(6)-dimethyl-L-lysyl(4)-[histone H3] + S-adenosyl-L-homocysteine + H(+)</text>
        <dbReference type="Rhea" id="RHEA:60268"/>
        <dbReference type="Rhea" id="RHEA-COMP:15540"/>
        <dbReference type="Rhea" id="RHEA-COMP:15543"/>
        <dbReference type="ChEBI" id="CHEBI:15378"/>
        <dbReference type="ChEBI" id="CHEBI:57856"/>
        <dbReference type="ChEBI" id="CHEBI:59789"/>
        <dbReference type="ChEBI" id="CHEBI:61929"/>
        <dbReference type="ChEBI" id="CHEBI:61976"/>
    </reaction>
</comment>
<comment type="catalytic activity">
    <reaction evidence="1">
        <text>N(6),N(6)-dimethyl-L-lysyl(4)-[histone H3] + S-adenosyl-L-methionine = N(6),N(6),N(6)-trimethyl-L-lysyl(4)-[histone H3] + S-adenosyl-L-homocysteine + H(+)</text>
        <dbReference type="Rhea" id="RHEA:60272"/>
        <dbReference type="Rhea" id="RHEA-COMP:15537"/>
        <dbReference type="Rhea" id="RHEA-COMP:15540"/>
        <dbReference type="ChEBI" id="CHEBI:15378"/>
        <dbReference type="ChEBI" id="CHEBI:57856"/>
        <dbReference type="ChEBI" id="CHEBI:59789"/>
        <dbReference type="ChEBI" id="CHEBI:61961"/>
        <dbReference type="ChEBI" id="CHEBI:61976"/>
    </reaction>
</comment>
<comment type="subunit">
    <text evidence="1">Component of the Set1C/COMPASS complex.</text>
</comment>
<comment type="subcellular location">
    <subcellularLocation>
        <location evidence="6">Nucleus</location>
    </subcellularLocation>
    <subcellularLocation>
        <location evidence="6">Chromosome</location>
    </subcellularLocation>
</comment>
<comment type="domain">
    <text evidence="1">The RxxxRR motif forms an adapter helix that bridges the nucleosome and ubiquitin.</text>
</comment>
<comment type="similarity">
    <text evidence="3">Belongs to the class V-like SAM-binding methyltransferase superfamily.</text>
</comment>
<reference key="1">
    <citation type="journal article" date="2004" name="Proc. Natl. Acad. Sci. U.S.A.">
        <title>The diploid genome sequence of Candida albicans.</title>
        <authorList>
            <person name="Jones T."/>
            <person name="Federspiel N.A."/>
            <person name="Chibana H."/>
            <person name="Dungan J."/>
            <person name="Kalman S."/>
            <person name="Magee B.B."/>
            <person name="Newport G."/>
            <person name="Thorstenson Y.R."/>
            <person name="Agabian N."/>
            <person name="Magee P.T."/>
            <person name="Davis R.W."/>
            <person name="Scherer S."/>
        </authorList>
    </citation>
    <scope>NUCLEOTIDE SEQUENCE [LARGE SCALE GENOMIC DNA]</scope>
    <source>
        <strain>SC5314 / ATCC MYA-2876</strain>
    </source>
</reference>
<reference key="2">
    <citation type="journal article" date="2007" name="Genome Biol.">
        <title>Assembly of the Candida albicans genome into sixteen supercontigs aligned on the eight chromosomes.</title>
        <authorList>
            <person name="van het Hoog M."/>
            <person name="Rast T.J."/>
            <person name="Martchenko M."/>
            <person name="Grindle S."/>
            <person name="Dignard D."/>
            <person name="Hogues H."/>
            <person name="Cuomo C."/>
            <person name="Berriman M."/>
            <person name="Scherer S."/>
            <person name="Magee B.B."/>
            <person name="Whiteway M."/>
            <person name="Chibana H."/>
            <person name="Nantel A."/>
            <person name="Magee P.T."/>
        </authorList>
    </citation>
    <scope>GENOME REANNOTATION</scope>
    <source>
        <strain>SC5314 / ATCC MYA-2876</strain>
    </source>
</reference>
<reference key="3">
    <citation type="journal article" date="2013" name="Genome Biol.">
        <title>Assembly of a phased diploid Candida albicans genome facilitates allele-specific measurements and provides a simple model for repeat and indel structure.</title>
        <authorList>
            <person name="Muzzey D."/>
            <person name="Schwartz K."/>
            <person name="Weissman J.S."/>
            <person name="Sherlock G."/>
        </authorList>
    </citation>
    <scope>NUCLEOTIDE SEQUENCE [LARGE SCALE GENOMIC DNA]</scope>
    <scope>GENOME REANNOTATION</scope>
    <source>
        <strain>SC5314 / ATCC MYA-2876</strain>
    </source>
</reference>
<reference key="4">
    <citation type="journal article" date="2006" name="Mol. Microbiol.">
        <title>Candida albicans SET1 encodes a histone 3 lysine 4 methyltransferase that contributes to the pathogenesis of invasive candidiasis.</title>
        <authorList>
            <person name="Raman S.B."/>
            <person name="Nguyen M.H."/>
            <person name="Zhang Z."/>
            <person name="Cheng S."/>
            <person name="Jia H.Y."/>
            <person name="Weisner N."/>
            <person name="Iczkowski K."/>
            <person name="Clancy C.J."/>
        </authorList>
    </citation>
    <scope>FUNCTION</scope>
</reference>